<feature type="chain" id="PRO_1000051310" description="Small ribosomal subunit protein uS9">
    <location>
        <begin position="1"/>
        <end position="164"/>
    </location>
</feature>
<protein>
    <recommendedName>
        <fullName evidence="1">Small ribosomal subunit protein uS9</fullName>
    </recommendedName>
    <alternativeName>
        <fullName evidence="2">30S ribosomal protein S9</fullName>
    </alternativeName>
</protein>
<reference key="1">
    <citation type="submission" date="2007-09" db="EMBL/GenBank/DDBJ databases">
        <title>Complete genome sequencing of Rickettsia bellii.</title>
        <authorList>
            <person name="Madan A."/>
            <person name="Lee H."/>
            <person name="Madan A."/>
            <person name="Yoon J.-G."/>
            <person name="Ryu G.-Y."/>
            <person name="Dasch G."/>
            <person name="Ereemeva M."/>
        </authorList>
    </citation>
    <scope>NUCLEOTIDE SEQUENCE [LARGE SCALE GENOMIC DNA]</scope>
    <source>
        <strain>OSU 85-389</strain>
    </source>
</reference>
<name>RS9_RICB8</name>
<proteinExistence type="inferred from homology"/>
<gene>
    <name evidence="1" type="primary">rpsI</name>
    <name type="ordered locus">A1I_06600</name>
</gene>
<organism>
    <name type="scientific">Rickettsia bellii (strain OSU 85-389)</name>
    <dbReference type="NCBI Taxonomy" id="391896"/>
    <lineage>
        <taxon>Bacteria</taxon>
        <taxon>Pseudomonadati</taxon>
        <taxon>Pseudomonadota</taxon>
        <taxon>Alphaproteobacteria</taxon>
        <taxon>Rickettsiales</taxon>
        <taxon>Rickettsiaceae</taxon>
        <taxon>Rickettsieae</taxon>
        <taxon>Rickettsia</taxon>
        <taxon>belli group</taxon>
    </lineage>
</organism>
<dbReference type="EMBL" id="CP000849">
    <property type="protein sequence ID" value="ABV79636.1"/>
    <property type="molecule type" value="Genomic_DNA"/>
</dbReference>
<dbReference type="RefSeq" id="WP_011476917.1">
    <property type="nucleotide sequence ID" value="NC_009883.1"/>
</dbReference>
<dbReference type="SMR" id="A8GXN6"/>
<dbReference type="KEGG" id="rbo:A1I_06600"/>
<dbReference type="HOGENOM" id="CLU_046483_2_0_5"/>
<dbReference type="GO" id="GO:0022627">
    <property type="term" value="C:cytosolic small ribosomal subunit"/>
    <property type="evidence" value="ECO:0007669"/>
    <property type="project" value="TreeGrafter"/>
</dbReference>
<dbReference type="GO" id="GO:0003723">
    <property type="term" value="F:RNA binding"/>
    <property type="evidence" value="ECO:0007669"/>
    <property type="project" value="TreeGrafter"/>
</dbReference>
<dbReference type="GO" id="GO:0003735">
    <property type="term" value="F:structural constituent of ribosome"/>
    <property type="evidence" value="ECO:0007669"/>
    <property type="project" value="InterPro"/>
</dbReference>
<dbReference type="GO" id="GO:0006412">
    <property type="term" value="P:translation"/>
    <property type="evidence" value="ECO:0007669"/>
    <property type="project" value="UniProtKB-UniRule"/>
</dbReference>
<dbReference type="FunFam" id="3.30.230.10:FF:000001">
    <property type="entry name" value="30S ribosomal protein S9"/>
    <property type="match status" value="1"/>
</dbReference>
<dbReference type="Gene3D" id="3.30.230.10">
    <property type="match status" value="1"/>
</dbReference>
<dbReference type="HAMAP" id="MF_00532_B">
    <property type="entry name" value="Ribosomal_uS9_B"/>
    <property type="match status" value="1"/>
</dbReference>
<dbReference type="InterPro" id="IPR020568">
    <property type="entry name" value="Ribosomal_Su5_D2-typ_SF"/>
</dbReference>
<dbReference type="InterPro" id="IPR000754">
    <property type="entry name" value="Ribosomal_uS9"/>
</dbReference>
<dbReference type="InterPro" id="IPR023035">
    <property type="entry name" value="Ribosomal_uS9_bac/plastid"/>
</dbReference>
<dbReference type="InterPro" id="IPR020574">
    <property type="entry name" value="Ribosomal_uS9_CS"/>
</dbReference>
<dbReference type="InterPro" id="IPR014721">
    <property type="entry name" value="Ribsml_uS5_D2-typ_fold_subgr"/>
</dbReference>
<dbReference type="NCBIfam" id="NF001099">
    <property type="entry name" value="PRK00132.1"/>
    <property type="match status" value="1"/>
</dbReference>
<dbReference type="PANTHER" id="PTHR21569">
    <property type="entry name" value="RIBOSOMAL PROTEIN S9"/>
    <property type="match status" value="1"/>
</dbReference>
<dbReference type="PANTHER" id="PTHR21569:SF1">
    <property type="entry name" value="SMALL RIBOSOMAL SUBUNIT PROTEIN US9M"/>
    <property type="match status" value="1"/>
</dbReference>
<dbReference type="Pfam" id="PF00380">
    <property type="entry name" value="Ribosomal_S9"/>
    <property type="match status" value="1"/>
</dbReference>
<dbReference type="SUPFAM" id="SSF54211">
    <property type="entry name" value="Ribosomal protein S5 domain 2-like"/>
    <property type="match status" value="1"/>
</dbReference>
<dbReference type="PROSITE" id="PS00360">
    <property type="entry name" value="RIBOSOMAL_S9"/>
    <property type="match status" value="1"/>
</dbReference>
<accession>A8GXN6</accession>
<keyword id="KW-0687">Ribonucleoprotein</keyword>
<keyword id="KW-0689">Ribosomal protein</keyword>
<comment type="similarity">
    <text evidence="1">Belongs to the universal ribosomal protein uS9 family.</text>
</comment>
<evidence type="ECO:0000255" key="1">
    <source>
        <dbReference type="HAMAP-Rule" id="MF_00532"/>
    </source>
</evidence>
<evidence type="ECO:0000305" key="2"/>
<sequence>MTTLKIKTDKVEKPLNKEALIADKQTVKTPKEKMDNSGRFYATGKRKNAIARVWLKPGKGQVIVNKKSLDQYFASETQVKTILQPFTLTKTNNQYDIVCTVRGGGISGQKGAILHGISKALAQSAPDFHAVLRKGGFLTRDSRVVERKKYGQHKARKKTQFSKR</sequence>